<keyword id="KW-0963">Cytoplasm</keyword>
<keyword id="KW-0489">Methyltransferase</keyword>
<keyword id="KW-1185">Reference proteome</keyword>
<keyword id="KW-0698">rRNA processing</keyword>
<keyword id="KW-0949">S-adenosyl-L-methionine</keyword>
<keyword id="KW-0808">Transferase</keyword>
<proteinExistence type="evidence at protein level"/>
<organism>
    <name type="scientific">Mycobacterium tuberculosis (strain ATCC 25618 / H37Rv)</name>
    <dbReference type="NCBI Taxonomy" id="83332"/>
    <lineage>
        <taxon>Bacteria</taxon>
        <taxon>Bacillati</taxon>
        <taxon>Actinomycetota</taxon>
        <taxon>Actinomycetes</taxon>
        <taxon>Mycobacteriales</taxon>
        <taxon>Mycobacteriaceae</taxon>
        <taxon>Mycobacterium</taxon>
        <taxon>Mycobacterium tuberculosis complex</taxon>
    </lineage>
</organism>
<feature type="chain" id="PRO_0000108667" description="Ribosomal RNA small subunit methyltransferase H">
    <location>
        <begin position="1"/>
        <end position="396"/>
    </location>
</feature>
<feature type="binding site" evidence="1">
    <location>
        <begin position="101"/>
        <end position="103"/>
    </location>
    <ligand>
        <name>S-adenosyl-L-methionine</name>
        <dbReference type="ChEBI" id="CHEBI:59789"/>
    </ligand>
</feature>
<feature type="binding site" evidence="1">
    <location>
        <position position="120"/>
    </location>
    <ligand>
        <name>S-adenosyl-L-methionine</name>
        <dbReference type="ChEBI" id="CHEBI:59789"/>
    </ligand>
</feature>
<feature type="binding site" evidence="1">
    <location>
        <position position="147"/>
    </location>
    <ligand>
        <name>S-adenosyl-L-methionine</name>
        <dbReference type="ChEBI" id="CHEBI:59789"/>
    </ligand>
</feature>
<feature type="binding site" evidence="1">
    <location>
        <position position="171"/>
    </location>
    <ligand>
        <name>S-adenosyl-L-methionine</name>
        <dbReference type="ChEBI" id="CHEBI:59789"/>
    </ligand>
</feature>
<feature type="binding site" evidence="1">
    <location>
        <position position="178"/>
    </location>
    <ligand>
        <name>S-adenosyl-L-methionine</name>
        <dbReference type="ChEBI" id="CHEBI:59789"/>
    </ligand>
</feature>
<sequence>MQTRAPWSLPEATLAYFPNARFVSSDRDLGAGAAPGIAASRSTACQTWGGITVADPGSGPTGFGHVPVLAQRCFELLTPALTRYYPDGSQAVLLDATIGAGGHAERFLEGLPGLRLIGLDRDPTALDVARSRLVRFADRLTLVHTRYDCLGAALAESGYAAVGSVDGILFDLGVSSMQLDRAERGFAYATDAPLDMRMDPTTPLTAADIVNTYDEAALADILRRYGEERFARRIAAGIVRRRAKTPFTSTAELVALLYQAIPAPARRVGGHPAKRTFQALRIAVNDELESLRTAVPAALDALAIGGRIAVLAYQSLEDRIVKRVFAEAVASATPAGLPVELPGHEPRFRSLTHGAERASVAEIERNPRSTPVRLRALQRVEHRAQSQQWATEKGDS</sequence>
<accession>P9WJP1</accession>
<accession>L0TBI2</accession>
<accession>O06212</accession>
<accession>P65429</accession>
<protein>
    <recommendedName>
        <fullName evidence="1">Ribosomal RNA small subunit methyltransferase H</fullName>
        <ecNumber evidence="1">2.1.1.199</ecNumber>
    </recommendedName>
    <alternativeName>
        <fullName evidence="1">16S rRNA m(4)C1402 methyltransferase</fullName>
    </alternativeName>
    <alternativeName>
        <fullName evidence="1">rRNA (cytosine-N(4)-)-methyltransferase RsmH</fullName>
    </alternativeName>
</protein>
<name>RSMH_MYCTU</name>
<reference key="1">
    <citation type="journal article" date="1998" name="Nature">
        <title>Deciphering the biology of Mycobacterium tuberculosis from the complete genome sequence.</title>
        <authorList>
            <person name="Cole S.T."/>
            <person name="Brosch R."/>
            <person name="Parkhill J."/>
            <person name="Garnier T."/>
            <person name="Churcher C.M."/>
            <person name="Harris D.E."/>
            <person name="Gordon S.V."/>
            <person name="Eiglmeier K."/>
            <person name="Gas S."/>
            <person name="Barry C.E. III"/>
            <person name="Tekaia F."/>
            <person name="Badcock K."/>
            <person name="Basham D."/>
            <person name="Brown D."/>
            <person name="Chillingworth T."/>
            <person name="Connor R."/>
            <person name="Davies R.M."/>
            <person name="Devlin K."/>
            <person name="Feltwell T."/>
            <person name="Gentles S."/>
            <person name="Hamlin N."/>
            <person name="Holroyd S."/>
            <person name="Hornsby T."/>
            <person name="Jagels K."/>
            <person name="Krogh A."/>
            <person name="McLean J."/>
            <person name="Moule S."/>
            <person name="Murphy L.D."/>
            <person name="Oliver S."/>
            <person name="Osborne J."/>
            <person name="Quail M.A."/>
            <person name="Rajandream M.A."/>
            <person name="Rogers J."/>
            <person name="Rutter S."/>
            <person name="Seeger K."/>
            <person name="Skelton S."/>
            <person name="Squares S."/>
            <person name="Squares R."/>
            <person name="Sulston J.E."/>
            <person name="Taylor K."/>
            <person name="Whitehead S."/>
            <person name="Barrell B.G."/>
        </authorList>
    </citation>
    <scope>NUCLEOTIDE SEQUENCE [LARGE SCALE GENOMIC DNA]</scope>
    <source>
        <strain>ATCC 25618 / H37Rv</strain>
    </source>
</reference>
<reference key="2">
    <citation type="journal article" date="2008" name="BMC Syst. Biol.">
        <title>targetTB: a target identification pipeline for Mycobacterium tuberculosis through an interactome, reactome and genome-scale structural analysis.</title>
        <authorList>
            <person name="Raman K."/>
            <person name="Yeturu K."/>
            <person name="Chandra N."/>
        </authorList>
    </citation>
    <scope>IDENTIFICATION AS A DRUG TARGET [LARGE SCALE ANALYSIS]</scope>
</reference>
<reference key="3">
    <citation type="journal article" date="2011" name="Mol. Cell. Proteomics">
        <title>Proteogenomic analysis of Mycobacterium tuberculosis by high resolution mass spectrometry.</title>
        <authorList>
            <person name="Kelkar D.S."/>
            <person name="Kumar D."/>
            <person name="Kumar P."/>
            <person name="Balakrishnan L."/>
            <person name="Muthusamy B."/>
            <person name="Yadav A.K."/>
            <person name="Shrivastava P."/>
            <person name="Marimuthu A."/>
            <person name="Anand S."/>
            <person name="Sundaram H."/>
            <person name="Kingsbury R."/>
            <person name="Harsha H.C."/>
            <person name="Nair B."/>
            <person name="Prasad T.S."/>
            <person name="Chauhan D.S."/>
            <person name="Katoch K."/>
            <person name="Katoch V.M."/>
            <person name="Kumar P."/>
            <person name="Chaerkady R."/>
            <person name="Ramachandran S."/>
            <person name="Dash D."/>
            <person name="Pandey A."/>
        </authorList>
    </citation>
    <scope>IDENTIFICATION BY MASS SPECTROMETRY [LARGE SCALE ANALYSIS]</scope>
    <source>
        <strain>ATCC 25618 / H37Rv</strain>
    </source>
</reference>
<evidence type="ECO:0000255" key="1">
    <source>
        <dbReference type="HAMAP-Rule" id="MF_01007"/>
    </source>
</evidence>
<gene>
    <name evidence="1" type="primary">rsmH</name>
    <name type="synonym">mraW</name>
    <name type="ordered locus">Rv2165c</name>
    <name type="ORF">MTCY270.03</name>
</gene>
<dbReference type="EC" id="2.1.1.199" evidence="1"/>
<dbReference type="EMBL" id="AL123456">
    <property type="protein sequence ID" value="CCP44942.1"/>
    <property type="molecule type" value="Genomic_DNA"/>
</dbReference>
<dbReference type="PIR" id="A70581">
    <property type="entry name" value="A70581"/>
</dbReference>
<dbReference type="RefSeq" id="NP_216681.4">
    <property type="nucleotide sequence ID" value="NC_000962.3"/>
</dbReference>
<dbReference type="RefSeq" id="WP_003411221.1">
    <property type="nucleotide sequence ID" value="NZ_NVQJ01000088.1"/>
</dbReference>
<dbReference type="SMR" id="P9WJP1"/>
<dbReference type="FunCoup" id="P9WJP1">
    <property type="interactions" value="312"/>
</dbReference>
<dbReference type="STRING" id="83332.Rv2165c"/>
<dbReference type="PaxDb" id="83332-Rv2165c"/>
<dbReference type="DNASU" id="888462"/>
<dbReference type="GeneID" id="888462"/>
<dbReference type="KEGG" id="mtu:Rv2165c"/>
<dbReference type="KEGG" id="mtv:RVBD_2165c"/>
<dbReference type="PATRIC" id="fig|83332.111.peg.2411"/>
<dbReference type="TubercuList" id="Rv2165c"/>
<dbReference type="eggNOG" id="COG0275">
    <property type="taxonomic scope" value="Bacteria"/>
</dbReference>
<dbReference type="InParanoid" id="P9WJP1"/>
<dbReference type="OrthoDB" id="9806637at2"/>
<dbReference type="Proteomes" id="UP000001584">
    <property type="component" value="Chromosome"/>
</dbReference>
<dbReference type="GO" id="GO:0005737">
    <property type="term" value="C:cytoplasm"/>
    <property type="evidence" value="ECO:0000318"/>
    <property type="project" value="GO_Central"/>
</dbReference>
<dbReference type="GO" id="GO:0005886">
    <property type="term" value="C:plasma membrane"/>
    <property type="evidence" value="ECO:0007005"/>
    <property type="project" value="MTBBASE"/>
</dbReference>
<dbReference type="GO" id="GO:0071424">
    <property type="term" value="F:rRNA (cytosine-N4-)-methyltransferase activity"/>
    <property type="evidence" value="ECO:0000318"/>
    <property type="project" value="GO_Central"/>
</dbReference>
<dbReference type="GO" id="GO:0070475">
    <property type="term" value="P:rRNA base methylation"/>
    <property type="evidence" value="ECO:0000318"/>
    <property type="project" value="GO_Central"/>
</dbReference>
<dbReference type="FunFam" id="1.10.150.170:FF:000001">
    <property type="entry name" value="Ribosomal RNA small subunit methyltransferase H"/>
    <property type="match status" value="1"/>
</dbReference>
<dbReference type="Gene3D" id="1.10.150.170">
    <property type="entry name" value="Putative methyltransferase TM0872, insert domain"/>
    <property type="match status" value="1"/>
</dbReference>
<dbReference type="Gene3D" id="3.40.50.150">
    <property type="entry name" value="Vaccinia Virus protein VP39"/>
    <property type="match status" value="1"/>
</dbReference>
<dbReference type="HAMAP" id="MF_01007">
    <property type="entry name" value="16SrRNA_methyltr_H"/>
    <property type="match status" value="1"/>
</dbReference>
<dbReference type="InterPro" id="IPR002903">
    <property type="entry name" value="RsmH"/>
</dbReference>
<dbReference type="InterPro" id="IPR023397">
    <property type="entry name" value="SAM-dep_MeTrfase_MraW_recog"/>
</dbReference>
<dbReference type="InterPro" id="IPR029063">
    <property type="entry name" value="SAM-dependent_MTases_sf"/>
</dbReference>
<dbReference type="NCBIfam" id="TIGR00006">
    <property type="entry name" value="16S rRNA (cytosine(1402)-N(4))-methyltransferase RsmH"/>
    <property type="match status" value="1"/>
</dbReference>
<dbReference type="PANTHER" id="PTHR11265:SF0">
    <property type="entry name" value="12S RRNA N4-METHYLCYTIDINE METHYLTRANSFERASE"/>
    <property type="match status" value="1"/>
</dbReference>
<dbReference type="PANTHER" id="PTHR11265">
    <property type="entry name" value="S-ADENOSYL-METHYLTRANSFERASE MRAW"/>
    <property type="match status" value="1"/>
</dbReference>
<dbReference type="Pfam" id="PF01795">
    <property type="entry name" value="Methyltransf_5"/>
    <property type="match status" value="1"/>
</dbReference>
<dbReference type="SUPFAM" id="SSF81799">
    <property type="entry name" value="Putative methyltransferase TM0872, insert domain"/>
    <property type="match status" value="1"/>
</dbReference>
<dbReference type="SUPFAM" id="SSF53335">
    <property type="entry name" value="S-adenosyl-L-methionine-dependent methyltransferases"/>
    <property type="match status" value="1"/>
</dbReference>
<comment type="function">
    <text evidence="1">Specifically methylates the N4 position of cytidine in position 1402 (C1402) of 16S rRNA.</text>
</comment>
<comment type="catalytic activity">
    <reaction evidence="1">
        <text>cytidine(1402) in 16S rRNA + S-adenosyl-L-methionine = N(4)-methylcytidine(1402) in 16S rRNA + S-adenosyl-L-homocysteine + H(+)</text>
        <dbReference type="Rhea" id="RHEA:42928"/>
        <dbReference type="Rhea" id="RHEA-COMP:10286"/>
        <dbReference type="Rhea" id="RHEA-COMP:10287"/>
        <dbReference type="ChEBI" id="CHEBI:15378"/>
        <dbReference type="ChEBI" id="CHEBI:57856"/>
        <dbReference type="ChEBI" id="CHEBI:59789"/>
        <dbReference type="ChEBI" id="CHEBI:74506"/>
        <dbReference type="ChEBI" id="CHEBI:82748"/>
        <dbReference type="EC" id="2.1.1.199"/>
    </reaction>
</comment>
<comment type="subcellular location">
    <subcellularLocation>
        <location evidence="1">Cytoplasm</location>
    </subcellularLocation>
</comment>
<comment type="miscellaneous">
    <text>Was identified as a high-confidence drug target.</text>
</comment>
<comment type="similarity">
    <text evidence="1">Belongs to the methyltransferase superfamily. RsmH family.</text>
</comment>